<gene>
    <name evidence="1" type="primary">rbcL</name>
</gene>
<protein>
    <recommendedName>
        <fullName evidence="1">Ribulose bisphosphate carboxylase large chain</fullName>
        <shortName evidence="1">RuBisCO large subunit</shortName>
        <ecNumber evidence="1">4.1.1.39</ecNumber>
    </recommendedName>
</protein>
<name>RBL_BETNI</name>
<geneLocation type="chloroplast"/>
<feature type="chain" id="PRO_0000062376" description="Ribulose bisphosphate carboxylase large chain">
    <location>
        <begin position="1" status="less than"/>
        <end position="466"/>
    </location>
</feature>
<feature type="active site" description="Proton acceptor" evidence="1">
    <location>
        <position position="166"/>
    </location>
</feature>
<feature type="active site" description="Proton acceptor" evidence="1">
    <location>
        <position position="285"/>
    </location>
</feature>
<feature type="binding site" description="in homodimeric partner" evidence="1">
    <location>
        <position position="114"/>
    </location>
    <ligand>
        <name>substrate</name>
    </ligand>
</feature>
<feature type="binding site" evidence="1">
    <location>
        <position position="164"/>
    </location>
    <ligand>
        <name>substrate</name>
    </ligand>
</feature>
<feature type="binding site" evidence="1">
    <location>
        <position position="168"/>
    </location>
    <ligand>
        <name>substrate</name>
    </ligand>
</feature>
<feature type="binding site" description="via carbamate group" evidence="1">
    <location>
        <position position="192"/>
    </location>
    <ligand>
        <name>Mg(2+)</name>
        <dbReference type="ChEBI" id="CHEBI:18420"/>
    </ligand>
</feature>
<feature type="binding site" evidence="1">
    <location>
        <position position="194"/>
    </location>
    <ligand>
        <name>Mg(2+)</name>
        <dbReference type="ChEBI" id="CHEBI:18420"/>
    </ligand>
</feature>
<feature type="binding site" evidence="1">
    <location>
        <position position="195"/>
    </location>
    <ligand>
        <name>Mg(2+)</name>
        <dbReference type="ChEBI" id="CHEBI:18420"/>
    </ligand>
</feature>
<feature type="binding site" evidence="1">
    <location>
        <position position="286"/>
    </location>
    <ligand>
        <name>substrate</name>
    </ligand>
</feature>
<feature type="binding site" evidence="1">
    <location>
        <position position="318"/>
    </location>
    <ligand>
        <name>substrate</name>
    </ligand>
</feature>
<feature type="binding site" evidence="1">
    <location>
        <position position="370"/>
    </location>
    <ligand>
        <name>substrate</name>
    </ligand>
</feature>
<feature type="site" description="Transition state stabilizer" evidence="1">
    <location>
        <position position="325"/>
    </location>
</feature>
<feature type="modified residue" description="N6,N6,N6-trimethyllysine" evidence="1">
    <location>
        <position position="5"/>
    </location>
</feature>
<feature type="modified residue" description="N6-carboxylysine" evidence="1">
    <location>
        <position position="192"/>
    </location>
</feature>
<feature type="disulfide bond" description="Interchain; in linked form" evidence="1">
    <location>
        <position position="238"/>
    </location>
</feature>
<feature type="non-terminal residue">
    <location>
        <position position="1"/>
    </location>
</feature>
<proteinExistence type="inferred from homology"/>
<sequence length="466" mass="51699">SVAFKAGVKEYKLTYYTPDYETKDTDILAAFRVTPQPGVPPEEAGAAVAAESSTGTWTTVWTDGLTSLDRYKGRCYHIEPVAGEESQFIAYVAYPLDLFEEGSVTNMFTSIVGNVFGFKALRALRLEDLRIPPAYSKTFQGPPHGIQVERDKLNKYGRPLLGCTIKPKLGLSAKNYGRAVYECLRGGLDFTKDDENVNSQPFMRWRDRFLFCAEAIYKAQAETGEIKGHYLNATAGTCEEMMKRAIFARELGVPIVMHDYLTGGFTANTSLAHYCRDNGLLLHIHRAMHAVIDRQKNHGMHFRVLAKALRMSGGDHIHAGTVVGKLEGEREITLGFVDLLRDDYIEKDRSRGIYFTQDWVSLPGVLPVASGGIHVWHMPALTEIFGDDSVLQFGGGTLGHPWGNAPGAVANRVALEACVQARNEGRDLAREGNEIIREAAKWSPELAAACEVWKEIKFEFPAMDTL</sequence>
<dbReference type="EC" id="4.1.1.39" evidence="1"/>
<dbReference type="EMBL" id="L01889">
    <property type="protein sequence ID" value="AAA84040.2"/>
    <property type="molecule type" value="Genomic_DNA"/>
</dbReference>
<dbReference type="EMBL" id="L12634">
    <property type="protein sequence ID" value="AAA84041.2"/>
    <property type="molecule type" value="Genomic_DNA"/>
</dbReference>
<dbReference type="SMR" id="P28384"/>
<dbReference type="GO" id="GO:0009507">
    <property type="term" value="C:chloroplast"/>
    <property type="evidence" value="ECO:0007669"/>
    <property type="project" value="UniProtKB-SubCell"/>
</dbReference>
<dbReference type="GO" id="GO:0000287">
    <property type="term" value="F:magnesium ion binding"/>
    <property type="evidence" value="ECO:0007669"/>
    <property type="project" value="InterPro"/>
</dbReference>
<dbReference type="GO" id="GO:0004497">
    <property type="term" value="F:monooxygenase activity"/>
    <property type="evidence" value="ECO:0007669"/>
    <property type="project" value="UniProtKB-KW"/>
</dbReference>
<dbReference type="GO" id="GO:0016984">
    <property type="term" value="F:ribulose-bisphosphate carboxylase activity"/>
    <property type="evidence" value="ECO:0007669"/>
    <property type="project" value="UniProtKB-EC"/>
</dbReference>
<dbReference type="GO" id="GO:0009853">
    <property type="term" value="P:photorespiration"/>
    <property type="evidence" value="ECO:0007669"/>
    <property type="project" value="UniProtKB-KW"/>
</dbReference>
<dbReference type="GO" id="GO:0019253">
    <property type="term" value="P:reductive pentose-phosphate cycle"/>
    <property type="evidence" value="ECO:0007669"/>
    <property type="project" value="UniProtKB-KW"/>
</dbReference>
<dbReference type="CDD" id="cd08212">
    <property type="entry name" value="RuBisCO_large_I"/>
    <property type="match status" value="1"/>
</dbReference>
<dbReference type="FunFam" id="3.20.20.110:FF:000001">
    <property type="entry name" value="Ribulose bisphosphate carboxylase large chain"/>
    <property type="match status" value="1"/>
</dbReference>
<dbReference type="FunFam" id="3.30.70.150:FF:000001">
    <property type="entry name" value="Ribulose bisphosphate carboxylase large chain"/>
    <property type="match status" value="1"/>
</dbReference>
<dbReference type="Gene3D" id="3.20.20.110">
    <property type="entry name" value="Ribulose bisphosphate carboxylase, large subunit, C-terminal domain"/>
    <property type="match status" value="1"/>
</dbReference>
<dbReference type="Gene3D" id="3.30.70.150">
    <property type="entry name" value="RuBisCO large subunit, N-terminal domain"/>
    <property type="match status" value="1"/>
</dbReference>
<dbReference type="HAMAP" id="MF_01338">
    <property type="entry name" value="RuBisCO_L_type1"/>
    <property type="match status" value="1"/>
</dbReference>
<dbReference type="InterPro" id="IPR033966">
    <property type="entry name" value="RuBisCO"/>
</dbReference>
<dbReference type="InterPro" id="IPR020878">
    <property type="entry name" value="RuBisCo_large_chain_AS"/>
</dbReference>
<dbReference type="InterPro" id="IPR000685">
    <property type="entry name" value="RuBisCO_lsu_C"/>
</dbReference>
<dbReference type="InterPro" id="IPR036376">
    <property type="entry name" value="RuBisCO_lsu_C_sf"/>
</dbReference>
<dbReference type="InterPro" id="IPR017443">
    <property type="entry name" value="RuBisCO_lsu_fd_N"/>
</dbReference>
<dbReference type="InterPro" id="IPR036422">
    <property type="entry name" value="RuBisCO_lsu_N_sf"/>
</dbReference>
<dbReference type="InterPro" id="IPR020888">
    <property type="entry name" value="RuBisCO_lsuI"/>
</dbReference>
<dbReference type="NCBIfam" id="NF003252">
    <property type="entry name" value="PRK04208.1"/>
    <property type="match status" value="1"/>
</dbReference>
<dbReference type="PANTHER" id="PTHR42704">
    <property type="entry name" value="RIBULOSE BISPHOSPHATE CARBOXYLASE"/>
    <property type="match status" value="1"/>
</dbReference>
<dbReference type="PANTHER" id="PTHR42704:SF15">
    <property type="entry name" value="RIBULOSE BISPHOSPHATE CARBOXYLASE LARGE CHAIN"/>
    <property type="match status" value="1"/>
</dbReference>
<dbReference type="Pfam" id="PF00016">
    <property type="entry name" value="RuBisCO_large"/>
    <property type="match status" value="1"/>
</dbReference>
<dbReference type="Pfam" id="PF02788">
    <property type="entry name" value="RuBisCO_large_N"/>
    <property type="match status" value="1"/>
</dbReference>
<dbReference type="SFLD" id="SFLDG01052">
    <property type="entry name" value="RuBisCO"/>
    <property type="match status" value="1"/>
</dbReference>
<dbReference type="SFLD" id="SFLDS00014">
    <property type="entry name" value="RuBisCO"/>
    <property type="match status" value="1"/>
</dbReference>
<dbReference type="SFLD" id="SFLDG00301">
    <property type="entry name" value="RuBisCO-like_proteins"/>
    <property type="match status" value="1"/>
</dbReference>
<dbReference type="SUPFAM" id="SSF51649">
    <property type="entry name" value="RuBisCo, C-terminal domain"/>
    <property type="match status" value="1"/>
</dbReference>
<dbReference type="SUPFAM" id="SSF54966">
    <property type="entry name" value="RuBisCO, large subunit, small (N-terminal) domain"/>
    <property type="match status" value="1"/>
</dbReference>
<dbReference type="PROSITE" id="PS00157">
    <property type="entry name" value="RUBISCO_LARGE"/>
    <property type="match status" value="1"/>
</dbReference>
<organism>
    <name type="scientific">Betula nigra</name>
    <name type="common">River birch</name>
    <dbReference type="NCBI Taxonomy" id="3508"/>
    <lineage>
        <taxon>Eukaryota</taxon>
        <taxon>Viridiplantae</taxon>
        <taxon>Streptophyta</taxon>
        <taxon>Embryophyta</taxon>
        <taxon>Tracheophyta</taxon>
        <taxon>Spermatophyta</taxon>
        <taxon>Magnoliopsida</taxon>
        <taxon>eudicotyledons</taxon>
        <taxon>Gunneridae</taxon>
        <taxon>Pentapetalae</taxon>
        <taxon>rosids</taxon>
        <taxon>fabids</taxon>
        <taxon>Fagales</taxon>
        <taxon>Betulaceae</taxon>
        <taxon>Betula</taxon>
    </lineage>
</organism>
<accession>P28384</accession>
<keyword id="KW-0113">Calvin cycle</keyword>
<keyword id="KW-0120">Carbon dioxide fixation</keyword>
<keyword id="KW-0150">Chloroplast</keyword>
<keyword id="KW-1015">Disulfide bond</keyword>
<keyword id="KW-0456">Lyase</keyword>
<keyword id="KW-0460">Magnesium</keyword>
<keyword id="KW-0479">Metal-binding</keyword>
<keyword id="KW-0488">Methylation</keyword>
<keyword id="KW-0503">Monooxygenase</keyword>
<keyword id="KW-0560">Oxidoreductase</keyword>
<keyword id="KW-0601">Photorespiration</keyword>
<keyword id="KW-0602">Photosynthesis</keyword>
<keyword id="KW-0934">Plastid</keyword>
<comment type="function">
    <text evidence="1">RuBisCO catalyzes two reactions: the carboxylation of D-ribulose 1,5-bisphosphate, the primary event in carbon dioxide fixation, as well as the oxidative fragmentation of the pentose substrate in the photorespiration process. Both reactions occur simultaneously and in competition at the same active site.</text>
</comment>
<comment type="catalytic activity">
    <reaction evidence="1">
        <text>2 (2R)-3-phosphoglycerate + 2 H(+) = D-ribulose 1,5-bisphosphate + CO2 + H2O</text>
        <dbReference type="Rhea" id="RHEA:23124"/>
        <dbReference type="ChEBI" id="CHEBI:15377"/>
        <dbReference type="ChEBI" id="CHEBI:15378"/>
        <dbReference type="ChEBI" id="CHEBI:16526"/>
        <dbReference type="ChEBI" id="CHEBI:57870"/>
        <dbReference type="ChEBI" id="CHEBI:58272"/>
        <dbReference type="EC" id="4.1.1.39"/>
    </reaction>
</comment>
<comment type="catalytic activity">
    <reaction evidence="1">
        <text>D-ribulose 1,5-bisphosphate + O2 = 2-phosphoglycolate + (2R)-3-phosphoglycerate + 2 H(+)</text>
        <dbReference type="Rhea" id="RHEA:36631"/>
        <dbReference type="ChEBI" id="CHEBI:15378"/>
        <dbReference type="ChEBI" id="CHEBI:15379"/>
        <dbReference type="ChEBI" id="CHEBI:57870"/>
        <dbReference type="ChEBI" id="CHEBI:58033"/>
        <dbReference type="ChEBI" id="CHEBI:58272"/>
    </reaction>
</comment>
<comment type="cofactor">
    <cofactor evidence="1">
        <name>Mg(2+)</name>
        <dbReference type="ChEBI" id="CHEBI:18420"/>
    </cofactor>
    <text evidence="1">Binds 1 Mg(2+) ion per subunit.</text>
</comment>
<comment type="subunit">
    <text evidence="1">Heterohexadecamer of 8 large chains and 8 small chains; disulfide-linked. The disulfide link is formed within the large subunit homodimers.</text>
</comment>
<comment type="subcellular location">
    <subcellularLocation>
        <location>Plastid</location>
        <location>Chloroplast</location>
    </subcellularLocation>
</comment>
<comment type="PTM">
    <text evidence="1">The disulfide bond which can form in the large chain dimeric partners within the hexadecamer appears to be associated with oxidative stress and protein turnover.</text>
</comment>
<comment type="miscellaneous">
    <text evidence="1">The basic functional RuBisCO is composed of a large chain homodimer in a 'head-to-tail' conformation. In form I RuBisCO this homodimer is arranged in a barrel-like tetramer with the small subunits forming a tetrameric 'cap' on each end of the 'barrel'.</text>
</comment>
<comment type="similarity">
    <text evidence="1">Belongs to the RuBisCO large chain family. Type I subfamily.</text>
</comment>
<evidence type="ECO:0000255" key="1">
    <source>
        <dbReference type="HAMAP-Rule" id="MF_01338"/>
    </source>
</evidence>
<reference key="1">
    <citation type="journal article" date="1992" name="Science">
        <title>Carnivorous plants: phylogeny and structural evolution.</title>
        <authorList>
            <person name="Albert V.A."/>
            <person name="Williams S.E."/>
            <person name="Chase M.W."/>
        </authorList>
    </citation>
    <scope>NUCLEOTIDE SEQUENCE [GENOMIC DNA]</scope>
</reference>